<reference key="1">
    <citation type="submission" date="2007-08" db="EMBL/GenBank/DDBJ databases">
        <authorList>
            <consortium name="The Citrobacter koseri Genome Sequencing Project"/>
            <person name="McClelland M."/>
            <person name="Sanderson E.K."/>
            <person name="Porwollik S."/>
            <person name="Spieth J."/>
            <person name="Clifton W.S."/>
            <person name="Latreille P."/>
            <person name="Courtney L."/>
            <person name="Wang C."/>
            <person name="Pepin K."/>
            <person name="Bhonagiri V."/>
            <person name="Nash W."/>
            <person name="Johnson M."/>
            <person name="Thiruvilangam P."/>
            <person name="Wilson R."/>
        </authorList>
    </citation>
    <scope>NUCLEOTIDE SEQUENCE [LARGE SCALE GENOMIC DNA]</scope>
    <source>
        <strain>ATCC BAA-895 / CDC 4225-83 / SGSC4696</strain>
    </source>
</reference>
<organism>
    <name type="scientific">Citrobacter koseri (strain ATCC BAA-895 / CDC 4225-83 / SGSC4696)</name>
    <dbReference type="NCBI Taxonomy" id="290338"/>
    <lineage>
        <taxon>Bacteria</taxon>
        <taxon>Pseudomonadati</taxon>
        <taxon>Pseudomonadota</taxon>
        <taxon>Gammaproteobacteria</taxon>
        <taxon>Enterobacterales</taxon>
        <taxon>Enterobacteriaceae</taxon>
        <taxon>Citrobacter</taxon>
    </lineage>
</organism>
<feature type="chain" id="PRO_1000072906" description="tRNA/tmRNA (uracil-C(5))-methyltransferase">
    <location>
        <begin position="1"/>
        <end position="366"/>
    </location>
</feature>
<feature type="active site" description="Nucleophile" evidence="1">
    <location>
        <position position="324"/>
    </location>
</feature>
<feature type="active site" description="Proton acceptor" evidence="1">
    <location>
        <position position="358"/>
    </location>
</feature>
<feature type="binding site" evidence="1">
    <location>
        <position position="190"/>
    </location>
    <ligand>
        <name>S-adenosyl-L-methionine</name>
        <dbReference type="ChEBI" id="CHEBI:59789"/>
    </ligand>
</feature>
<feature type="binding site" evidence="1">
    <location>
        <position position="218"/>
    </location>
    <ligand>
        <name>S-adenosyl-L-methionine</name>
        <dbReference type="ChEBI" id="CHEBI:59789"/>
    </ligand>
</feature>
<feature type="binding site" evidence="1">
    <location>
        <position position="223"/>
    </location>
    <ligand>
        <name>S-adenosyl-L-methionine</name>
        <dbReference type="ChEBI" id="CHEBI:59789"/>
    </ligand>
</feature>
<feature type="binding site" evidence="1">
    <location>
        <position position="239"/>
    </location>
    <ligand>
        <name>S-adenosyl-L-methionine</name>
        <dbReference type="ChEBI" id="CHEBI:59789"/>
    </ligand>
</feature>
<feature type="binding site" evidence="1">
    <location>
        <position position="299"/>
    </location>
    <ligand>
        <name>S-adenosyl-L-methionine</name>
        <dbReference type="ChEBI" id="CHEBI:59789"/>
    </ligand>
</feature>
<accession>A8AKV5</accession>
<protein>
    <recommendedName>
        <fullName evidence="1">tRNA/tmRNA (uracil-C(5))-methyltransferase</fullName>
        <ecNumber evidence="1">2.1.1.-</ecNumber>
        <ecNumber evidence="1">2.1.1.35</ecNumber>
    </recommendedName>
    <alternativeName>
        <fullName evidence="1">tRNA (uracil(54)-C(5))-methyltransferase</fullName>
    </alternativeName>
    <alternativeName>
        <fullName evidence="1">tRNA(m5U54)-methyltransferase</fullName>
        <shortName evidence="1">RUMT</shortName>
    </alternativeName>
    <alternativeName>
        <fullName evidence="1">tmRNA (uracil(341)-C(5))-methyltransferase</fullName>
    </alternativeName>
</protein>
<name>TRMA_CITK8</name>
<gene>
    <name evidence="1" type="primary">trmA</name>
    <name type="ordered locus">CKO_03026</name>
</gene>
<dbReference type="EC" id="2.1.1.-" evidence="1"/>
<dbReference type="EC" id="2.1.1.35" evidence="1"/>
<dbReference type="EMBL" id="CP000822">
    <property type="protein sequence ID" value="ABV14118.1"/>
    <property type="molecule type" value="Genomic_DNA"/>
</dbReference>
<dbReference type="RefSeq" id="WP_012133825.1">
    <property type="nucleotide sequence ID" value="NC_009792.1"/>
</dbReference>
<dbReference type="SMR" id="A8AKV5"/>
<dbReference type="STRING" id="290338.CKO_03026"/>
<dbReference type="GeneID" id="45136837"/>
<dbReference type="KEGG" id="cko:CKO_03026"/>
<dbReference type="HOGENOM" id="CLU_043022_0_0_6"/>
<dbReference type="OrthoDB" id="9804590at2"/>
<dbReference type="Proteomes" id="UP000008148">
    <property type="component" value="Chromosome"/>
</dbReference>
<dbReference type="GO" id="GO:0005829">
    <property type="term" value="C:cytosol"/>
    <property type="evidence" value="ECO:0007669"/>
    <property type="project" value="TreeGrafter"/>
</dbReference>
<dbReference type="GO" id="GO:0019843">
    <property type="term" value="F:rRNA binding"/>
    <property type="evidence" value="ECO:0007669"/>
    <property type="project" value="TreeGrafter"/>
</dbReference>
<dbReference type="GO" id="GO:0030697">
    <property type="term" value="F:tRNA (uracil(54)-C5)-methyltransferase activity, S-adenosyl methionine-dependent"/>
    <property type="evidence" value="ECO:0007669"/>
    <property type="project" value="UniProtKB-UniRule"/>
</dbReference>
<dbReference type="GO" id="GO:0000049">
    <property type="term" value="F:tRNA binding"/>
    <property type="evidence" value="ECO:0007669"/>
    <property type="project" value="TreeGrafter"/>
</dbReference>
<dbReference type="GO" id="GO:0030488">
    <property type="term" value="P:tRNA methylation"/>
    <property type="evidence" value="ECO:0007669"/>
    <property type="project" value="UniProtKB-UniRule"/>
</dbReference>
<dbReference type="CDD" id="cd02440">
    <property type="entry name" value="AdoMet_MTases"/>
    <property type="match status" value="1"/>
</dbReference>
<dbReference type="FunFam" id="2.40.50.1070:FF:000001">
    <property type="entry name" value="tRNA/tmRNA (uracil-C(5))-methyltransferase"/>
    <property type="match status" value="1"/>
</dbReference>
<dbReference type="FunFam" id="3.40.50.150:FF:000012">
    <property type="entry name" value="tRNA/tmRNA (uracil-C(5))-methyltransferase"/>
    <property type="match status" value="1"/>
</dbReference>
<dbReference type="Gene3D" id="2.40.50.1070">
    <property type="match status" value="1"/>
</dbReference>
<dbReference type="Gene3D" id="3.40.50.150">
    <property type="entry name" value="Vaccinia Virus protein VP39"/>
    <property type="match status" value="1"/>
</dbReference>
<dbReference type="HAMAP" id="MF_01011">
    <property type="entry name" value="RNA_methyltr_TrmA"/>
    <property type="match status" value="1"/>
</dbReference>
<dbReference type="InterPro" id="IPR030390">
    <property type="entry name" value="MeTrfase_TrmA_AS"/>
</dbReference>
<dbReference type="InterPro" id="IPR030391">
    <property type="entry name" value="MeTrfase_TrmA_CS"/>
</dbReference>
<dbReference type="InterPro" id="IPR029063">
    <property type="entry name" value="SAM-dependent_MTases_sf"/>
</dbReference>
<dbReference type="InterPro" id="IPR011869">
    <property type="entry name" value="TrmA_MeTrfase"/>
</dbReference>
<dbReference type="InterPro" id="IPR010280">
    <property type="entry name" value="U5_MeTrfase_fam"/>
</dbReference>
<dbReference type="NCBIfam" id="TIGR02143">
    <property type="entry name" value="trmA_only"/>
    <property type="match status" value="1"/>
</dbReference>
<dbReference type="PANTHER" id="PTHR47790">
    <property type="entry name" value="TRNA/TMRNA (URACIL-C(5))-METHYLTRANSFERASE"/>
    <property type="match status" value="1"/>
</dbReference>
<dbReference type="PANTHER" id="PTHR47790:SF2">
    <property type="entry name" value="TRNA_TMRNA (URACIL-C(5))-METHYLTRANSFERASE"/>
    <property type="match status" value="1"/>
</dbReference>
<dbReference type="Pfam" id="PF05958">
    <property type="entry name" value="tRNA_U5-meth_tr"/>
    <property type="match status" value="1"/>
</dbReference>
<dbReference type="SUPFAM" id="SSF53335">
    <property type="entry name" value="S-adenosyl-L-methionine-dependent methyltransferases"/>
    <property type="match status" value="1"/>
</dbReference>
<dbReference type="PROSITE" id="PS51687">
    <property type="entry name" value="SAM_MT_RNA_M5U"/>
    <property type="match status" value="1"/>
</dbReference>
<dbReference type="PROSITE" id="PS01230">
    <property type="entry name" value="TRMA_1"/>
    <property type="match status" value="1"/>
</dbReference>
<dbReference type="PROSITE" id="PS01231">
    <property type="entry name" value="TRMA_2"/>
    <property type="match status" value="1"/>
</dbReference>
<comment type="function">
    <text evidence="1">Dual-specificity methyltransferase that catalyzes the formation of 5-methyluridine at position 54 (m5U54) in all tRNAs, and that of position 341 (m5U341) in tmRNA (transfer-mRNA).</text>
</comment>
<comment type="catalytic activity">
    <reaction evidence="1">
        <text>uridine(54) in tRNA + S-adenosyl-L-methionine = 5-methyluridine(54) in tRNA + S-adenosyl-L-homocysteine + H(+)</text>
        <dbReference type="Rhea" id="RHEA:42712"/>
        <dbReference type="Rhea" id="RHEA-COMP:10167"/>
        <dbReference type="Rhea" id="RHEA-COMP:10193"/>
        <dbReference type="ChEBI" id="CHEBI:15378"/>
        <dbReference type="ChEBI" id="CHEBI:57856"/>
        <dbReference type="ChEBI" id="CHEBI:59789"/>
        <dbReference type="ChEBI" id="CHEBI:65315"/>
        <dbReference type="ChEBI" id="CHEBI:74447"/>
        <dbReference type="EC" id="2.1.1.35"/>
    </reaction>
</comment>
<comment type="catalytic activity">
    <reaction evidence="1">
        <text>uridine(341) in tmRNA + S-adenosyl-L-methionine = 5-methyluridine(341) in tmRNA + S-adenosyl-L-homocysteine + H(+)</text>
        <dbReference type="Rhea" id="RHEA:43612"/>
        <dbReference type="Rhea" id="RHEA-COMP:10630"/>
        <dbReference type="Rhea" id="RHEA-COMP:10631"/>
        <dbReference type="ChEBI" id="CHEBI:15378"/>
        <dbReference type="ChEBI" id="CHEBI:57856"/>
        <dbReference type="ChEBI" id="CHEBI:59789"/>
        <dbReference type="ChEBI" id="CHEBI:65315"/>
        <dbReference type="ChEBI" id="CHEBI:74447"/>
    </reaction>
</comment>
<comment type="similarity">
    <text evidence="1">Belongs to the class I-like SAM-binding methyltransferase superfamily. RNA M5U methyltransferase family. TrmA subfamily.</text>
</comment>
<proteinExistence type="inferred from homology"/>
<sequence length="366" mass="42085">MTPEHLPTEQYDAQLAEKVVRLQSMMAPFSDLVPEVFRSPASHYRMRAEFRLWHDGDDLYHIIFEQQTKSRIRVDSFPAASELINQLMTAMIEGVRHNRVLRHKLFQIDYLTTMSNQAVVSLLYHKKLDDEWRQEAETLRDALRAQNLNVHLIGRATKTKIELDQDYIDERLPVAGKEMIYRQVENSFTQPNAAMNIQMLEWALDATKASKGDLLELYCGNGNFSLALARNFDRVLATEIAKPSVAAAQYNIAANHIDNVQIIRMAAEEFTQAMNGVREFNRLQGIDLKSYQCETIFVDPPRSGLDSETEKMVQAYPRILYISCNPETLCKNLETLSQTHNVSRLALFDQFPYTHHMECGVLLTAR</sequence>
<evidence type="ECO:0000255" key="1">
    <source>
        <dbReference type="HAMAP-Rule" id="MF_01011"/>
    </source>
</evidence>
<keyword id="KW-0489">Methyltransferase</keyword>
<keyword id="KW-1185">Reference proteome</keyword>
<keyword id="KW-0949">S-adenosyl-L-methionine</keyword>
<keyword id="KW-0808">Transferase</keyword>
<keyword id="KW-0819">tRNA processing</keyword>